<name>TIM10_CAEBR</name>
<feature type="chain" id="PRO_0000228058" description="Mitochondrial import inner membrane translocase subunit Tim10">
    <location>
        <begin position="1"/>
        <end position="86"/>
    </location>
</feature>
<feature type="short sequence motif" description="Twin CX3C motif">
    <location>
        <begin position="29"/>
        <end position="54"/>
    </location>
</feature>
<feature type="disulfide bond" evidence="1">
    <location>
        <begin position="29"/>
        <end position="54"/>
    </location>
</feature>
<feature type="disulfide bond" evidence="1">
    <location>
        <begin position="33"/>
        <end position="50"/>
    </location>
</feature>
<accession>Q61BP6</accession>
<accession>A8XHG4</accession>
<sequence length="86" mass="9564">MATDAQMAQVAELEVEMMSDMYRRMTNACQAKCIATAFKESELTKGEAVCLDRCVAKYLDVHEKLGKRLTSMSQGDEAALQKIAQQ</sequence>
<evidence type="ECO:0000250" key="1"/>
<evidence type="ECO:0000305" key="2"/>
<protein>
    <recommendedName>
        <fullName>Mitochondrial import inner membrane translocase subunit Tim10</fullName>
    </recommendedName>
</protein>
<comment type="function">
    <text evidence="1">Mitochondrial intermembrane chaperone that participates in the import and insertion of multi-pass transmembrane proteins into the mitochondrial inner membrane. May also be required for the transfer of beta-barrel precursors from the TOM complex to the sorting and assembly machinery (SAM complex) of the outer membrane. Acts as a chaperone-like protein that protects the hydrophobic precursors from aggregation and guide them through the mitochondrial intermembrane space (By similarity).</text>
</comment>
<comment type="subunit">
    <text evidence="1">Heterohexamer; composed of 3 copies of tim-9/tin-9.1 and 3 copies of tim-10/tin-10, named soluble 70 kDa complex. The complex associates with the tim-22 component of the TIM22 complex. Interacts with multi-pass transmembrane proteins in transit (By similarity).</text>
</comment>
<comment type="subcellular location">
    <subcellularLocation>
        <location evidence="1">Mitochondrion inner membrane</location>
        <topology evidence="1">Peripheral membrane protein</topology>
        <orientation evidence="1">Intermembrane side</orientation>
    </subcellularLocation>
</comment>
<comment type="domain">
    <text evidence="1">The twin CX3C motif contains 4 conserved Cys residues that form 2 disulfide bonds in the mitochondrial intermembrane space. However, during the transit of tim-10/tin-10 from cytoplasm into mitochondrion, the Cys residues probably coordinate zinc, thereby preventing folding and allowing its transfer across mitochondrial outer membrane (By similarity).</text>
</comment>
<comment type="similarity">
    <text evidence="2">Belongs to the small Tim family.</text>
</comment>
<organism>
    <name type="scientific">Caenorhabditis briggsae</name>
    <dbReference type="NCBI Taxonomy" id="6238"/>
    <lineage>
        <taxon>Eukaryota</taxon>
        <taxon>Metazoa</taxon>
        <taxon>Ecdysozoa</taxon>
        <taxon>Nematoda</taxon>
        <taxon>Chromadorea</taxon>
        <taxon>Rhabditida</taxon>
        <taxon>Rhabditina</taxon>
        <taxon>Rhabditomorpha</taxon>
        <taxon>Rhabditoidea</taxon>
        <taxon>Rhabditidae</taxon>
        <taxon>Peloderinae</taxon>
        <taxon>Caenorhabditis</taxon>
    </lineage>
</organism>
<proteinExistence type="inferred from homology"/>
<dbReference type="EMBL" id="HE601226">
    <property type="protein sequence ID" value="CAP32088.1"/>
    <property type="molecule type" value="Genomic_DNA"/>
</dbReference>
<dbReference type="SMR" id="Q61BP6"/>
<dbReference type="FunCoup" id="Q61BP6">
    <property type="interactions" value="1775"/>
</dbReference>
<dbReference type="STRING" id="6238.Q61BP6"/>
<dbReference type="EnsemblMetazoa" id="CBG13275.1">
    <property type="protein sequence ID" value="CBG13275.1"/>
    <property type="gene ID" value="WBGene00034058"/>
</dbReference>
<dbReference type="KEGG" id="cbr:CBG_13275"/>
<dbReference type="CTD" id="8583402"/>
<dbReference type="WormBase" id="CBG13275">
    <property type="protein sequence ID" value="CBP17747"/>
    <property type="gene ID" value="WBGene00034058"/>
    <property type="gene designation" value="Cbr-tin-10"/>
</dbReference>
<dbReference type="eggNOG" id="KOG3480">
    <property type="taxonomic scope" value="Eukaryota"/>
</dbReference>
<dbReference type="HOGENOM" id="CLU_162151_2_0_1"/>
<dbReference type="InParanoid" id="Q61BP6"/>
<dbReference type="OMA" id="VGENMQK"/>
<dbReference type="OrthoDB" id="274922at2759"/>
<dbReference type="Proteomes" id="UP000008549">
    <property type="component" value="Unassembled WGS sequence"/>
</dbReference>
<dbReference type="GO" id="GO:0005743">
    <property type="term" value="C:mitochondrial inner membrane"/>
    <property type="evidence" value="ECO:0000318"/>
    <property type="project" value="GO_Central"/>
</dbReference>
<dbReference type="GO" id="GO:0046872">
    <property type="term" value="F:metal ion binding"/>
    <property type="evidence" value="ECO:0007669"/>
    <property type="project" value="UniProtKB-KW"/>
</dbReference>
<dbReference type="GO" id="GO:0045039">
    <property type="term" value="P:protein insertion into mitochondrial inner membrane"/>
    <property type="evidence" value="ECO:0000318"/>
    <property type="project" value="GO_Central"/>
</dbReference>
<dbReference type="GO" id="GO:0040014">
    <property type="term" value="P:regulation of multicellular organism growth"/>
    <property type="evidence" value="ECO:0007669"/>
    <property type="project" value="EnsemblMetazoa"/>
</dbReference>
<dbReference type="FunFam" id="1.10.287.810:FF:000002">
    <property type="entry name" value="Mitochondrial import inner membrane translocase subunit tim10"/>
    <property type="match status" value="1"/>
</dbReference>
<dbReference type="Gene3D" id="1.10.287.810">
    <property type="entry name" value="Mitochondrial import inner membrane translocase subunit tim13 like domains"/>
    <property type="match status" value="1"/>
</dbReference>
<dbReference type="InterPro" id="IPR004217">
    <property type="entry name" value="Tim10-like"/>
</dbReference>
<dbReference type="InterPro" id="IPR035427">
    <property type="entry name" value="Tim10-like_dom_sf"/>
</dbReference>
<dbReference type="PANTHER" id="PTHR11038">
    <property type="entry name" value="MITOCHONDRIAL IMPORT INNER MEMBRANE TRANSLOCASE SUBUNIT TIM10"/>
    <property type="match status" value="1"/>
</dbReference>
<dbReference type="PANTHER" id="PTHR11038:SF16">
    <property type="entry name" value="MITOCHONDRIAL IMPORT INNER MEMBRANE TRANSLOCASE SUBUNIT TIM10"/>
    <property type="match status" value="1"/>
</dbReference>
<dbReference type="Pfam" id="PF02953">
    <property type="entry name" value="zf-Tim10_DDP"/>
    <property type="match status" value="1"/>
</dbReference>
<dbReference type="SUPFAM" id="SSF144122">
    <property type="entry name" value="Tim10-like"/>
    <property type="match status" value="1"/>
</dbReference>
<gene>
    <name type="primary">tin-10</name>
    <name type="synonym">tim-10</name>
    <name type="ORF">CBG13275</name>
</gene>
<reference key="1">
    <citation type="journal article" date="2003" name="PLoS Biol.">
        <title>The genome sequence of Caenorhabditis briggsae: a platform for comparative genomics.</title>
        <authorList>
            <person name="Stein L.D."/>
            <person name="Bao Z."/>
            <person name="Blasiar D."/>
            <person name="Blumenthal T."/>
            <person name="Brent M.R."/>
            <person name="Chen N."/>
            <person name="Chinwalla A."/>
            <person name="Clarke L."/>
            <person name="Clee C."/>
            <person name="Coghlan A."/>
            <person name="Coulson A."/>
            <person name="D'Eustachio P."/>
            <person name="Fitch D.H.A."/>
            <person name="Fulton L.A."/>
            <person name="Fulton R.E."/>
            <person name="Griffiths-Jones S."/>
            <person name="Harris T.W."/>
            <person name="Hillier L.W."/>
            <person name="Kamath R."/>
            <person name="Kuwabara P.E."/>
            <person name="Mardis E.R."/>
            <person name="Marra M.A."/>
            <person name="Miner T.L."/>
            <person name="Minx P."/>
            <person name="Mullikin J.C."/>
            <person name="Plumb R.W."/>
            <person name="Rogers J."/>
            <person name="Schein J.E."/>
            <person name="Sohrmann M."/>
            <person name="Spieth J."/>
            <person name="Stajich J.E."/>
            <person name="Wei C."/>
            <person name="Willey D."/>
            <person name="Wilson R.K."/>
            <person name="Durbin R.M."/>
            <person name="Waterston R.H."/>
        </authorList>
    </citation>
    <scope>NUCLEOTIDE SEQUENCE [LARGE SCALE GENOMIC DNA]</scope>
    <source>
        <strain>AF16</strain>
    </source>
</reference>
<keyword id="KW-0143">Chaperone</keyword>
<keyword id="KW-1015">Disulfide bond</keyword>
<keyword id="KW-0472">Membrane</keyword>
<keyword id="KW-0479">Metal-binding</keyword>
<keyword id="KW-0496">Mitochondrion</keyword>
<keyword id="KW-0999">Mitochondrion inner membrane</keyword>
<keyword id="KW-0653">Protein transport</keyword>
<keyword id="KW-1185">Reference proteome</keyword>
<keyword id="KW-0811">Translocation</keyword>
<keyword id="KW-0813">Transport</keyword>
<keyword id="KW-0862">Zinc</keyword>